<sequence length="295" mass="34047">MIEVLTTTDSQKLLHQLNALLEQESRCQPKVCGLRLIESAHDNGLRMTARLRDFEVKDLLSLTQFFGFDTETFSLAVNLLDRFLSKMKVQPKHLGCVGLSCFYLAVKSIEEERNVPLATDLIRISQYRFTVSDLMRMEKIVLEKVCWKVKATTAFQFLQLYYSLLQENLPLERRNNINFERLEAQLKACHCRIIFSKAKPSVLALSIIALEIQAQKCVELTEGIECLQKLSKINGRDLTFWQELVSKCLTEYSSNKCSKPNVQKLKWIVSGRTARQLKHSYYRIAHLPTIPEMVP</sequence>
<name>CCNG1_PONAB</name>
<proteinExistence type="evidence at transcript level"/>
<protein>
    <recommendedName>
        <fullName>Cyclin-G1</fullName>
    </recommendedName>
</protein>
<organism>
    <name type="scientific">Pongo abelii</name>
    <name type="common">Sumatran orangutan</name>
    <name type="synonym">Pongo pygmaeus abelii</name>
    <dbReference type="NCBI Taxonomy" id="9601"/>
    <lineage>
        <taxon>Eukaryota</taxon>
        <taxon>Metazoa</taxon>
        <taxon>Chordata</taxon>
        <taxon>Craniata</taxon>
        <taxon>Vertebrata</taxon>
        <taxon>Euteleostomi</taxon>
        <taxon>Mammalia</taxon>
        <taxon>Eutheria</taxon>
        <taxon>Euarchontoglires</taxon>
        <taxon>Primates</taxon>
        <taxon>Haplorrhini</taxon>
        <taxon>Catarrhini</taxon>
        <taxon>Hominidae</taxon>
        <taxon>Pongo</taxon>
    </lineage>
</organism>
<feature type="chain" id="PRO_0000080467" description="Cyclin-G1">
    <location>
        <begin position="1"/>
        <end position="295"/>
    </location>
</feature>
<reference key="1">
    <citation type="submission" date="2004-11" db="EMBL/GenBank/DDBJ databases">
        <authorList>
            <consortium name="The German cDNA consortium"/>
        </authorList>
    </citation>
    <scope>NUCLEOTIDE SEQUENCE [LARGE SCALE MRNA]</scope>
    <source>
        <tissue>Kidney</tissue>
    </source>
</reference>
<evidence type="ECO:0000250" key="1"/>
<evidence type="ECO:0000305" key="2"/>
<comment type="function">
    <text evidence="1">May play a role in growth regulation. Is associated with G2/M phase arrest in response to DNA damage. May be an intermediate by which p53 mediates its role as an inhibitor of cellular proliferation (By similarity).</text>
</comment>
<comment type="subcellular location">
    <subcellularLocation>
        <location evidence="1">Nucleus</location>
    </subcellularLocation>
    <text evidence="1">DNA replication foci after DNA damage.</text>
</comment>
<comment type="similarity">
    <text evidence="2">Belongs to the cyclin family. Cyclin G subfamily.</text>
</comment>
<keyword id="KW-0131">Cell cycle</keyword>
<keyword id="KW-0132">Cell division</keyword>
<keyword id="KW-0195">Cyclin</keyword>
<keyword id="KW-0498">Mitosis</keyword>
<keyword id="KW-0539">Nucleus</keyword>
<keyword id="KW-1185">Reference proteome</keyword>
<dbReference type="EMBL" id="CR860932">
    <property type="protein sequence ID" value="CAH93036.1"/>
    <property type="molecule type" value="mRNA"/>
</dbReference>
<dbReference type="SMR" id="Q5R5D0"/>
<dbReference type="FunCoup" id="Q5R5D0">
    <property type="interactions" value="2660"/>
</dbReference>
<dbReference type="STRING" id="9601.ENSPPYP00000017925"/>
<dbReference type="eggNOG" id="KOG0653">
    <property type="taxonomic scope" value="Eukaryota"/>
</dbReference>
<dbReference type="InParanoid" id="Q5R5D0"/>
<dbReference type="Proteomes" id="UP000001595">
    <property type="component" value="Unplaced"/>
</dbReference>
<dbReference type="GO" id="GO:0005634">
    <property type="term" value="C:nucleus"/>
    <property type="evidence" value="ECO:0007669"/>
    <property type="project" value="UniProtKB-SubCell"/>
</dbReference>
<dbReference type="GO" id="GO:0051301">
    <property type="term" value="P:cell division"/>
    <property type="evidence" value="ECO:0007669"/>
    <property type="project" value="UniProtKB-KW"/>
</dbReference>
<dbReference type="CDD" id="cd20583">
    <property type="entry name" value="CYCLIN_CCNG1"/>
    <property type="match status" value="1"/>
</dbReference>
<dbReference type="FunFam" id="1.10.472.10:FF:000006">
    <property type="entry name" value="Cyclin I"/>
    <property type="match status" value="1"/>
</dbReference>
<dbReference type="Gene3D" id="1.10.472.10">
    <property type="entry name" value="Cyclin-like"/>
    <property type="match status" value="2"/>
</dbReference>
<dbReference type="InterPro" id="IPR039361">
    <property type="entry name" value="Cyclin"/>
</dbReference>
<dbReference type="InterPro" id="IPR013763">
    <property type="entry name" value="Cyclin-like_dom"/>
</dbReference>
<dbReference type="InterPro" id="IPR036915">
    <property type="entry name" value="Cyclin-like_sf"/>
</dbReference>
<dbReference type="InterPro" id="IPR006671">
    <property type="entry name" value="Cyclin_N"/>
</dbReference>
<dbReference type="PANTHER" id="PTHR10177">
    <property type="entry name" value="CYCLINS"/>
    <property type="match status" value="1"/>
</dbReference>
<dbReference type="Pfam" id="PF00134">
    <property type="entry name" value="Cyclin_N"/>
    <property type="match status" value="1"/>
</dbReference>
<dbReference type="SMART" id="SM00385">
    <property type="entry name" value="CYCLIN"/>
    <property type="match status" value="1"/>
</dbReference>
<dbReference type="SUPFAM" id="SSF47954">
    <property type="entry name" value="Cyclin-like"/>
    <property type="match status" value="1"/>
</dbReference>
<gene>
    <name type="primary">CCNG1</name>
    <name type="synonym">CCNG</name>
</gene>
<accession>Q5R5D0</accession>